<feature type="chain" id="PRO_0000338779" description="Translation initiation factor IF-1 2">
    <location>
        <begin position="1"/>
        <end position="87"/>
    </location>
</feature>
<feature type="domain" description="S1-like" evidence="1">
    <location>
        <begin position="1"/>
        <end position="72"/>
    </location>
</feature>
<gene>
    <name evidence="1" type="primary">infA2</name>
    <name type="ordered locus">Bamb_3899</name>
</gene>
<keyword id="KW-0963">Cytoplasm</keyword>
<keyword id="KW-0396">Initiation factor</keyword>
<keyword id="KW-0648">Protein biosynthesis</keyword>
<keyword id="KW-0694">RNA-binding</keyword>
<keyword id="KW-0699">rRNA-binding</keyword>
<organism>
    <name type="scientific">Burkholderia ambifaria (strain ATCC BAA-244 / DSM 16087 / CCUG 44356 / LMG 19182 / AMMD)</name>
    <name type="common">Burkholderia cepacia (strain AMMD)</name>
    <dbReference type="NCBI Taxonomy" id="339670"/>
    <lineage>
        <taxon>Bacteria</taxon>
        <taxon>Pseudomonadati</taxon>
        <taxon>Pseudomonadota</taxon>
        <taxon>Betaproteobacteria</taxon>
        <taxon>Burkholderiales</taxon>
        <taxon>Burkholderiaceae</taxon>
        <taxon>Burkholderia</taxon>
        <taxon>Burkholderia cepacia complex</taxon>
    </lineage>
</organism>
<accession>Q0B8S0</accession>
<reference key="1">
    <citation type="submission" date="2006-08" db="EMBL/GenBank/DDBJ databases">
        <title>Complete sequence of chromosome 2 of Burkholderia cepacia AMMD.</title>
        <authorList>
            <person name="Copeland A."/>
            <person name="Lucas S."/>
            <person name="Lapidus A."/>
            <person name="Barry K."/>
            <person name="Detter J.C."/>
            <person name="Glavina del Rio T."/>
            <person name="Hammon N."/>
            <person name="Israni S."/>
            <person name="Pitluck S."/>
            <person name="Bruce D."/>
            <person name="Chain P."/>
            <person name="Malfatti S."/>
            <person name="Shin M."/>
            <person name="Vergez L."/>
            <person name="Schmutz J."/>
            <person name="Larimer F."/>
            <person name="Land M."/>
            <person name="Hauser L."/>
            <person name="Kyrpides N."/>
            <person name="Kim E."/>
            <person name="Parke J."/>
            <person name="Coenye T."/>
            <person name="Konstantinidis K."/>
            <person name="Ramette A."/>
            <person name="Tiedje J."/>
            <person name="Richardson P."/>
        </authorList>
    </citation>
    <scope>NUCLEOTIDE SEQUENCE [LARGE SCALE GENOMIC DNA]</scope>
    <source>
        <strain>ATCC BAA-244 / DSM 16087 / CCUG 44356 / LMG 19182 / AMMD</strain>
    </source>
</reference>
<comment type="function">
    <text evidence="1">One of the essential components for the initiation of protein synthesis. Stabilizes the binding of IF-2 and IF-3 on the 30S subunit to which N-formylmethionyl-tRNA(fMet) subsequently binds. Helps modulate mRNA selection, yielding the 30S pre-initiation complex (PIC). Upon addition of the 50S ribosomal subunit IF-1, IF-2 and IF-3 are released leaving the mature 70S translation initiation complex.</text>
</comment>
<comment type="subunit">
    <text evidence="1">Component of the 30S ribosomal translation pre-initiation complex which assembles on the 30S ribosome in the order IF-2 and IF-3, IF-1 and N-formylmethionyl-tRNA(fMet); mRNA recruitment can occur at any time during PIC assembly.</text>
</comment>
<comment type="subcellular location">
    <subcellularLocation>
        <location evidence="1">Cytoplasm</location>
    </subcellularLocation>
</comment>
<comment type="similarity">
    <text evidence="1">Belongs to the IF-1 family.</text>
</comment>
<dbReference type="EMBL" id="CP000441">
    <property type="protein sequence ID" value="ABI89453.1"/>
    <property type="molecule type" value="Genomic_DNA"/>
</dbReference>
<dbReference type="SMR" id="Q0B8S0"/>
<dbReference type="KEGG" id="bam:Bamb_3899"/>
<dbReference type="PATRIC" id="fig|339670.21.peg.4164"/>
<dbReference type="eggNOG" id="COG0361">
    <property type="taxonomic scope" value="Bacteria"/>
</dbReference>
<dbReference type="Proteomes" id="UP000000662">
    <property type="component" value="Chromosome 2"/>
</dbReference>
<dbReference type="GO" id="GO:0005829">
    <property type="term" value="C:cytosol"/>
    <property type="evidence" value="ECO:0007669"/>
    <property type="project" value="TreeGrafter"/>
</dbReference>
<dbReference type="GO" id="GO:0043022">
    <property type="term" value="F:ribosome binding"/>
    <property type="evidence" value="ECO:0007669"/>
    <property type="project" value="UniProtKB-UniRule"/>
</dbReference>
<dbReference type="GO" id="GO:0019843">
    <property type="term" value="F:rRNA binding"/>
    <property type="evidence" value="ECO:0007669"/>
    <property type="project" value="UniProtKB-UniRule"/>
</dbReference>
<dbReference type="GO" id="GO:0003743">
    <property type="term" value="F:translation initiation factor activity"/>
    <property type="evidence" value="ECO:0007669"/>
    <property type="project" value="UniProtKB-UniRule"/>
</dbReference>
<dbReference type="CDD" id="cd04451">
    <property type="entry name" value="S1_IF1"/>
    <property type="match status" value="1"/>
</dbReference>
<dbReference type="FunFam" id="2.40.50.140:FF:000002">
    <property type="entry name" value="Translation initiation factor IF-1"/>
    <property type="match status" value="1"/>
</dbReference>
<dbReference type="Gene3D" id="2.40.50.140">
    <property type="entry name" value="Nucleic acid-binding proteins"/>
    <property type="match status" value="1"/>
</dbReference>
<dbReference type="HAMAP" id="MF_00075">
    <property type="entry name" value="IF_1"/>
    <property type="match status" value="1"/>
</dbReference>
<dbReference type="InterPro" id="IPR012340">
    <property type="entry name" value="NA-bd_OB-fold"/>
</dbReference>
<dbReference type="InterPro" id="IPR006196">
    <property type="entry name" value="RNA-binding_domain_S1_IF1"/>
</dbReference>
<dbReference type="InterPro" id="IPR004368">
    <property type="entry name" value="TIF_IF1"/>
</dbReference>
<dbReference type="NCBIfam" id="TIGR00008">
    <property type="entry name" value="infA"/>
    <property type="match status" value="1"/>
</dbReference>
<dbReference type="PANTHER" id="PTHR33370">
    <property type="entry name" value="TRANSLATION INITIATION FACTOR IF-1, CHLOROPLASTIC"/>
    <property type="match status" value="1"/>
</dbReference>
<dbReference type="PANTHER" id="PTHR33370:SF1">
    <property type="entry name" value="TRANSLATION INITIATION FACTOR IF-1, CHLOROPLASTIC"/>
    <property type="match status" value="1"/>
</dbReference>
<dbReference type="Pfam" id="PF01176">
    <property type="entry name" value="eIF-1a"/>
    <property type="match status" value="1"/>
</dbReference>
<dbReference type="SUPFAM" id="SSF50249">
    <property type="entry name" value="Nucleic acid-binding proteins"/>
    <property type="match status" value="1"/>
</dbReference>
<dbReference type="PROSITE" id="PS50832">
    <property type="entry name" value="S1_IF1_TYPE"/>
    <property type="match status" value="1"/>
</dbReference>
<proteinExistence type="inferred from homology"/>
<name>IF12_BURCM</name>
<sequence length="87" mass="9879">MAKEELLELDGIVDEVLPDSKYRVTLENGVVVGAYASGRMRKNHIRILAGDRVTLELSMYDLTKGRINFRHKDANSTRPPRSGQPRR</sequence>
<evidence type="ECO:0000255" key="1">
    <source>
        <dbReference type="HAMAP-Rule" id="MF_00075"/>
    </source>
</evidence>
<protein>
    <recommendedName>
        <fullName evidence="1">Translation initiation factor IF-1 2</fullName>
    </recommendedName>
</protein>